<dbReference type="EC" id="5.4.99.27" evidence="1"/>
<dbReference type="EMBL" id="CP001072">
    <property type="protein sequence ID" value="ACD48406.1"/>
    <property type="molecule type" value="Genomic_DNA"/>
</dbReference>
<dbReference type="RefSeq" id="WP_001052414.1">
    <property type="nucleotide sequence ID" value="NC_010698.2"/>
</dbReference>
<dbReference type="SMR" id="B2UU74"/>
<dbReference type="KEGG" id="hps:HPSH_04880"/>
<dbReference type="HOGENOM" id="CLU_005281_4_0_7"/>
<dbReference type="GO" id="GO:0005829">
    <property type="term" value="C:cytosol"/>
    <property type="evidence" value="ECO:0007669"/>
    <property type="project" value="TreeGrafter"/>
</dbReference>
<dbReference type="GO" id="GO:0003723">
    <property type="term" value="F:RNA binding"/>
    <property type="evidence" value="ECO:0007669"/>
    <property type="project" value="InterPro"/>
</dbReference>
<dbReference type="GO" id="GO:0160150">
    <property type="term" value="F:tRNA pseudouridine(13) synthase activity"/>
    <property type="evidence" value="ECO:0007669"/>
    <property type="project" value="UniProtKB-EC"/>
</dbReference>
<dbReference type="GO" id="GO:0031119">
    <property type="term" value="P:tRNA pseudouridine synthesis"/>
    <property type="evidence" value="ECO:0007669"/>
    <property type="project" value="UniProtKB-UniRule"/>
</dbReference>
<dbReference type="CDD" id="cd02575">
    <property type="entry name" value="PseudoU_synth_EcTruD"/>
    <property type="match status" value="1"/>
</dbReference>
<dbReference type="FunFam" id="3.30.2350.20:FF:000008">
    <property type="entry name" value="tRNA pseudouridine synthase D"/>
    <property type="match status" value="1"/>
</dbReference>
<dbReference type="Gene3D" id="3.30.2350.20">
    <property type="entry name" value="TruD, catalytic domain"/>
    <property type="match status" value="1"/>
</dbReference>
<dbReference type="HAMAP" id="MF_01082">
    <property type="entry name" value="TruD"/>
    <property type="match status" value="1"/>
</dbReference>
<dbReference type="InterPro" id="IPR020103">
    <property type="entry name" value="PsdUridine_synth_cat_dom_sf"/>
</dbReference>
<dbReference type="InterPro" id="IPR001656">
    <property type="entry name" value="PsdUridine_synth_TruD"/>
</dbReference>
<dbReference type="InterPro" id="IPR020119">
    <property type="entry name" value="PsdUridine_synth_TruD_CS"/>
</dbReference>
<dbReference type="InterPro" id="IPR011760">
    <property type="entry name" value="PsdUridine_synth_TruD_insert"/>
</dbReference>
<dbReference type="InterPro" id="IPR042214">
    <property type="entry name" value="TruD_catalytic"/>
</dbReference>
<dbReference type="InterPro" id="IPR050170">
    <property type="entry name" value="TruD_pseudoU_synthase"/>
</dbReference>
<dbReference type="NCBIfam" id="NF002154">
    <property type="entry name" value="PRK00984.1-3"/>
    <property type="match status" value="1"/>
</dbReference>
<dbReference type="NCBIfam" id="TIGR00094">
    <property type="entry name" value="tRNA_TruD_broad"/>
    <property type="match status" value="1"/>
</dbReference>
<dbReference type="PANTHER" id="PTHR47811">
    <property type="entry name" value="TRNA PSEUDOURIDINE SYNTHASE D"/>
    <property type="match status" value="1"/>
</dbReference>
<dbReference type="PANTHER" id="PTHR47811:SF1">
    <property type="entry name" value="TRNA PSEUDOURIDINE SYNTHASE D"/>
    <property type="match status" value="1"/>
</dbReference>
<dbReference type="Pfam" id="PF01142">
    <property type="entry name" value="TruD"/>
    <property type="match status" value="2"/>
</dbReference>
<dbReference type="PIRSF" id="PIRSF037016">
    <property type="entry name" value="Pseudouridin_synth_euk_prd"/>
    <property type="match status" value="1"/>
</dbReference>
<dbReference type="SUPFAM" id="SSF55120">
    <property type="entry name" value="Pseudouridine synthase"/>
    <property type="match status" value="1"/>
</dbReference>
<dbReference type="PROSITE" id="PS50984">
    <property type="entry name" value="TRUD"/>
    <property type="match status" value="1"/>
</dbReference>
<dbReference type="PROSITE" id="PS01268">
    <property type="entry name" value="UPF0024"/>
    <property type="match status" value="1"/>
</dbReference>
<feature type="chain" id="PRO_1000136842" description="tRNA pseudouridine synthase D">
    <location>
        <begin position="1"/>
        <end position="381"/>
    </location>
</feature>
<feature type="domain" description="TRUD" evidence="1">
    <location>
        <begin position="160"/>
        <end position="335"/>
    </location>
</feature>
<feature type="active site" description="Nucleophile" evidence="1">
    <location>
        <position position="81"/>
    </location>
</feature>
<keyword id="KW-0413">Isomerase</keyword>
<keyword id="KW-0819">tRNA processing</keyword>
<accession>B2UU74</accession>
<comment type="function">
    <text evidence="1">Responsible for synthesis of pseudouridine from uracil-13 in transfer RNAs.</text>
</comment>
<comment type="catalytic activity">
    <reaction evidence="1">
        <text>uridine(13) in tRNA = pseudouridine(13) in tRNA</text>
        <dbReference type="Rhea" id="RHEA:42540"/>
        <dbReference type="Rhea" id="RHEA-COMP:10105"/>
        <dbReference type="Rhea" id="RHEA-COMP:10106"/>
        <dbReference type="ChEBI" id="CHEBI:65314"/>
        <dbReference type="ChEBI" id="CHEBI:65315"/>
        <dbReference type="EC" id="5.4.99.27"/>
    </reaction>
</comment>
<comment type="similarity">
    <text evidence="1">Belongs to the pseudouridine synthase TruD family.</text>
</comment>
<evidence type="ECO:0000255" key="1">
    <source>
        <dbReference type="HAMAP-Rule" id="MF_01082"/>
    </source>
</evidence>
<organism>
    <name type="scientific">Helicobacter pylori (strain Shi470)</name>
    <dbReference type="NCBI Taxonomy" id="512562"/>
    <lineage>
        <taxon>Bacteria</taxon>
        <taxon>Pseudomonadati</taxon>
        <taxon>Campylobacterota</taxon>
        <taxon>Epsilonproteobacteria</taxon>
        <taxon>Campylobacterales</taxon>
        <taxon>Helicobacteraceae</taxon>
        <taxon>Helicobacter</taxon>
    </lineage>
</organism>
<proteinExistence type="inferred from homology"/>
<sequence length="381" mass="44089">MNLNFMPLLHAYNHASIDFHFNSSARDFCVHEVPLYEFSNTGEHAVIQVRKSGLSTLEMLQIFSQILGVRIAELGYAGLKDKNALTTQFISLPKKYAPLLEKNTSNFQEKNLKILSLNYHHNKIKLGHLKGNRFFMRFKKMTPLNAQKTEQVLEQIARFGMPNYFGPQRFGKFNDNHQEGLKILQNQTKFAHQKLNAFLISSYQSYLFNALLSKRLEISKIISAFSVKENLEFFKQKNLNINPNTLKALKNQAHPFKILEGDVMRHYPYGKFFDALELEKESERFLKKEAAPTGLLDGKKALYAKNLSLEIEKEFQHNLLSSHAKTLGSRRFFWVFAENVTSQYVKEKAQFELGFYLPKGSYASALLKEIKHEKGENNDEF</sequence>
<reference key="1">
    <citation type="submission" date="2008-05" db="EMBL/GenBank/DDBJ databases">
        <title>Genome sequence of Helicobacter pylori from the remote Amazon: traces of Asian ancestry of the first Americans.</title>
        <authorList>
            <person name="Kersulyte D."/>
            <person name="Kalia A."/>
            <person name="Gilman R.H."/>
            <person name="Berg D.E."/>
        </authorList>
    </citation>
    <scope>NUCLEOTIDE SEQUENCE [LARGE SCALE GENOMIC DNA]</scope>
    <source>
        <strain>Shi470</strain>
    </source>
</reference>
<name>TRUD_HELPS</name>
<protein>
    <recommendedName>
        <fullName evidence="1">tRNA pseudouridine synthase D</fullName>
        <ecNumber evidence="1">5.4.99.27</ecNumber>
    </recommendedName>
    <alternativeName>
        <fullName evidence="1">tRNA pseudouridine(13) synthase</fullName>
    </alternativeName>
    <alternativeName>
        <fullName evidence="1">tRNA pseudouridylate synthase D</fullName>
    </alternativeName>
    <alternativeName>
        <fullName evidence="1">tRNA-uridine isomerase D</fullName>
    </alternativeName>
</protein>
<gene>
    <name evidence="1" type="primary">truD</name>
    <name type="ordered locus">HPSH_04880</name>
</gene>